<organism>
    <name type="scientific">Rhizobium johnstonii (strain DSM 114642 / LMG 32736 / 3841)</name>
    <name type="common">Rhizobium leguminosarum bv. viciae</name>
    <dbReference type="NCBI Taxonomy" id="216596"/>
    <lineage>
        <taxon>Bacteria</taxon>
        <taxon>Pseudomonadati</taxon>
        <taxon>Pseudomonadota</taxon>
        <taxon>Alphaproteobacteria</taxon>
        <taxon>Hyphomicrobiales</taxon>
        <taxon>Rhizobiaceae</taxon>
        <taxon>Rhizobium/Agrobacterium group</taxon>
        <taxon>Rhizobium</taxon>
        <taxon>Rhizobium johnstonii</taxon>
    </lineage>
</organism>
<proteinExistence type="inferred from homology"/>
<accession>Q1MMQ8</accession>
<feature type="chain" id="PRO_0000265690" description="Elongation factor 4">
    <location>
        <begin position="1"/>
        <end position="610"/>
    </location>
</feature>
<feature type="domain" description="tr-type G">
    <location>
        <begin position="13"/>
        <end position="195"/>
    </location>
</feature>
<feature type="binding site" evidence="1">
    <location>
        <begin position="25"/>
        <end position="30"/>
    </location>
    <ligand>
        <name>GTP</name>
        <dbReference type="ChEBI" id="CHEBI:37565"/>
    </ligand>
</feature>
<feature type="binding site" evidence="1">
    <location>
        <begin position="142"/>
        <end position="145"/>
    </location>
    <ligand>
        <name>GTP</name>
        <dbReference type="ChEBI" id="CHEBI:37565"/>
    </ligand>
</feature>
<dbReference type="EC" id="3.6.5.n1" evidence="1"/>
<dbReference type="EMBL" id="AM236080">
    <property type="protein sequence ID" value="CAK05744.1"/>
    <property type="molecule type" value="Genomic_DNA"/>
</dbReference>
<dbReference type="RefSeq" id="WP_011650062.1">
    <property type="nucleotide sequence ID" value="NC_008380.1"/>
</dbReference>
<dbReference type="SMR" id="Q1MMQ8"/>
<dbReference type="EnsemblBacteria" id="CAK05744">
    <property type="protein sequence ID" value="CAK05744"/>
    <property type="gene ID" value="RL0254"/>
</dbReference>
<dbReference type="KEGG" id="rle:RL0254"/>
<dbReference type="eggNOG" id="COG0481">
    <property type="taxonomic scope" value="Bacteria"/>
</dbReference>
<dbReference type="HOGENOM" id="CLU_009995_3_3_5"/>
<dbReference type="Proteomes" id="UP000006575">
    <property type="component" value="Chromosome"/>
</dbReference>
<dbReference type="GO" id="GO:0005886">
    <property type="term" value="C:plasma membrane"/>
    <property type="evidence" value="ECO:0007669"/>
    <property type="project" value="UniProtKB-SubCell"/>
</dbReference>
<dbReference type="GO" id="GO:0005525">
    <property type="term" value="F:GTP binding"/>
    <property type="evidence" value="ECO:0007669"/>
    <property type="project" value="UniProtKB-UniRule"/>
</dbReference>
<dbReference type="GO" id="GO:0003924">
    <property type="term" value="F:GTPase activity"/>
    <property type="evidence" value="ECO:0007669"/>
    <property type="project" value="UniProtKB-UniRule"/>
</dbReference>
<dbReference type="GO" id="GO:0097216">
    <property type="term" value="F:guanosine tetraphosphate binding"/>
    <property type="evidence" value="ECO:0007669"/>
    <property type="project" value="UniProtKB-ARBA"/>
</dbReference>
<dbReference type="GO" id="GO:0043022">
    <property type="term" value="F:ribosome binding"/>
    <property type="evidence" value="ECO:0007669"/>
    <property type="project" value="UniProtKB-UniRule"/>
</dbReference>
<dbReference type="GO" id="GO:0003746">
    <property type="term" value="F:translation elongation factor activity"/>
    <property type="evidence" value="ECO:0007669"/>
    <property type="project" value="UniProtKB-UniRule"/>
</dbReference>
<dbReference type="GO" id="GO:0045727">
    <property type="term" value="P:positive regulation of translation"/>
    <property type="evidence" value="ECO:0007669"/>
    <property type="project" value="UniProtKB-UniRule"/>
</dbReference>
<dbReference type="CDD" id="cd03699">
    <property type="entry name" value="EF4_II"/>
    <property type="match status" value="1"/>
</dbReference>
<dbReference type="CDD" id="cd16260">
    <property type="entry name" value="EF4_III"/>
    <property type="match status" value="1"/>
</dbReference>
<dbReference type="CDD" id="cd01890">
    <property type="entry name" value="LepA"/>
    <property type="match status" value="1"/>
</dbReference>
<dbReference type="CDD" id="cd03709">
    <property type="entry name" value="lepA_C"/>
    <property type="match status" value="1"/>
</dbReference>
<dbReference type="FunFam" id="3.40.50.300:FF:000078">
    <property type="entry name" value="Elongation factor 4"/>
    <property type="match status" value="1"/>
</dbReference>
<dbReference type="FunFam" id="2.40.30.10:FF:000015">
    <property type="entry name" value="Translation factor GUF1, mitochondrial"/>
    <property type="match status" value="1"/>
</dbReference>
<dbReference type="FunFam" id="3.30.70.240:FF:000007">
    <property type="entry name" value="Translation factor GUF1, mitochondrial"/>
    <property type="match status" value="1"/>
</dbReference>
<dbReference type="FunFam" id="3.30.70.2570:FF:000001">
    <property type="entry name" value="Translation factor GUF1, mitochondrial"/>
    <property type="match status" value="1"/>
</dbReference>
<dbReference type="FunFam" id="3.30.70.870:FF:000004">
    <property type="entry name" value="Translation factor GUF1, mitochondrial"/>
    <property type="match status" value="1"/>
</dbReference>
<dbReference type="Gene3D" id="3.30.70.240">
    <property type="match status" value="1"/>
</dbReference>
<dbReference type="Gene3D" id="3.30.70.2570">
    <property type="entry name" value="Elongation factor 4, C-terminal domain"/>
    <property type="match status" value="1"/>
</dbReference>
<dbReference type="Gene3D" id="3.30.70.870">
    <property type="entry name" value="Elongation Factor G (Translational Gtpase), domain 3"/>
    <property type="match status" value="1"/>
</dbReference>
<dbReference type="Gene3D" id="3.40.50.300">
    <property type="entry name" value="P-loop containing nucleotide triphosphate hydrolases"/>
    <property type="match status" value="1"/>
</dbReference>
<dbReference type="Gene3D" id="2.40.30.10">
    <property type="entry name" value="Translation factors"/>
    <property type="match status" value="1"/>
</dbReference>
<dbReference type="HAMAP" id="MF_00071">
    <property type="entry name" value="LepA"/>
    <property type="match status" value="1"/>
</dbReference>
<dbReference type="InterPro" id="IPR006297">
    <property type="entry name" value="EF-4"/>
</dbReference>
<dbReference type="InterPro" id="IPR035647">
    <property type="entry name" value="EFG_III/V"/>
</dbReference>
<dbReference type="InterPro" id="IPR000640">
    <property type="entry name" value="EFG_V-like"/>
</dbReference>
<dbReference type="InterPro" id="IPR004161">
    <property type="entry name" value="EFTu-like_2"/>
</dbReference>
<dbReference type="InterPro" id="IPR031157">
    <property type="entry name" value="G_TR_CS"/>
</dbReference>
<dbReference type="InterPro" id="IPR038363">
    <property type="entry name" value="LepA_C_sf"/>
</dbReference>
<dbReference type="InterPro" id="IPR013842">
    <property type="entry name" value="LepA_CTD"/>
</dbReference>
<dbReference type="InterPro" id="IPR035654">
    <property type="entry name" value="LepA_IV"/>
</dbReference>
<dbReference type="InterPro" id="IPR027417">
    <property type="entry name" value="P-loop_NTPase"/>
</dbReference>
<dbReference type="InterPro" id="IPR005225">
    <property type="entry name" value="Small_GTP-bd"/>
</dbReference>
<dbReference type="InterPro" id="IPR000795">
    <property type="entry name" value="T_Tr_GTP-bd_dom"/>
</dbReference>
<dbReference type="NCBIfam" id="TIGR01393">
    <property type="entry name" value="lepA"/>
    <property type="match status" value="1"/>
</dbReference>
<dbReference type="NCBIfam" id="TIGR00231">
    <property type="entry name" value="small_GTP"/>
    <property type="match status" value="1"/>
</dbReference>
<dbReference type="PANTHER" id="PTHR43512:SF4">
    <property type="entry name" value="TRANSLATION FACTOR GUF1 HOMOLOG, CHLOROPLASTIC"/>
    <property type="match status" value="1"/>
</dbReference>
<dbReference type="PANTHER" id="PTHR43512">
    <property type="entry name" value="TRANSLATION FACTOR GUF1-RELATED"/>
    <property type="match status" value="1"/>
</dbReference>
<dbReference type="Pfam" id="PF00679">
    <property type="entry name" value="EFG_C"/>
    <property type="match status" value="1"/>
</dbReference>
<dbReference type="Pfam" id="PF00009">
    <property type="entry name" value="GTP_EFTU"/>
    <property type="match status" value="1"/>
</dbReference>
<dbReference type="Pfam" id="PF03144">
    <property type="entry name" value="GTP_EFTU_D2"/>
    <property type="match status" value="1"/>
</dbReference>
<dbReference type="Pfam" id="PF06421">
    <property type="entry name" value="LepA_C"/>
    <property type="match status" value="1"/>
</dbReference>
<dbReference type="PRINTS" id="PR00315">
    <property type="entry name" value="ELONGATNFCT"/>
</dbReference>
<dbReference type="SUPFAM" id="SSF54980">
    <property type="entry name" value="EF-G C-terminal domain-like"/>
    <property type="match status" value="2"/>
</dbReference>
<dbReference type="SUPFAM" id="SSF52540">
    <property type="entry name" value="P-loop containing nucleoside triphosphate hydrolases"/>
    <property type="match status" value="1"/>
</dbReference>
<dbReference type="PROSITE" id="PS00301">
    <property type="entry name" value="G_TR_1"/>
    <property type="match status" value="1"/>
</dbReference>
<dbReference type="PROSITE" id="PS51722">
    <property type="entry name" value="G_TR_2"/>
    <property type="match status" value="1"/>
</dbReference>
<sequence length="610" mass="67430">MARMSTNSTTPLSHIRNFSIVAHIDHGKSTLADRLIQTTGGLAEREMSEQVLDNMDIERERGITIKAQTVRLHYQANNGEKYILNLIDTPGHVDFAYEVSRSLSACEGSLLVVDASQGVEAQTLANVYQAIDNNHEIVTVLNKIDLPAAEPDRIKEQIEEVIGIDASEAVLISAKTGLGIPDVLEAIVHKLPAPKSPGGDKAPLKALLVDSWYDAYLGVMVLVRVIDGVLTKGQTVRMMGTDAKYQVERVGVLTPKMVNIDRLGPGEIGFITASIKEVADTRVGDTITEDKRPTAQALPGFKPAQPVVFCGLFPVDAADFEDLRAAMGKLRLNDASFSFEMESSAALGFGFRCGFLGLLHLEIIQERLEREFDLDLIATAPSVVYKMFMTDGTERELHNPADMPDVVKISEIHEPWIRATILTPDDYLGGILKLCQDRRGIQIELTYVGTRAMLTYDLPLNEVVFDFYDRLKSISKGYASFDYTLTDHREGNLVKMSILVNGEPVDALSMMVHRTAAEKRGRDMCEKLKELIPKHMFKIPIQAAIGGNVIARETISALRKDVTAKCYGGDATRKRKLLDKQKAGKKRMRQFGKVEIPQEAFIAALKMGDE</sequence>
<comment type="function">
    <text evidence="1">Required for accurate and efficient protein synthesis under certain stress conditions. May act as a fidelity factor of the translation reaction, by catalyzing a one-codon backward translocation of tRNAs on improperly translocated ribosomes. Back-translocation proceeds from a post-translocation (POST) complex to a pre-translocation (PRE) complex, thus giving elongation factor G a second chance to translocate the tRNAs correctly. Binds to ribosomes in a GTP-dependent manner.</text>
</comment>
<comment type="catalytic activity">
    <reaction evidence="1">
        <text>GTP + H2O = GDP + phosphate + H(+)</text>
        <dbReference type="Rhea" id="RHEA:19669"/>
        <dbReference type="ChEBI" id="CHEBI:15377"/>
        <dbReference type="ChEBI" id="CHEBI:15378"/>
        <dbReference type="ChEBI" id="CHEBI:37565"/>
        <dbReference type="ChEBI" id="CHEBI:43474"/>
        <dbReference type="ChEBI" id="CHEBI:58189"/>
        <dbReference type="EC" id="3.6.5.n1"/>
    </reaction>
</comment>
<comment type="subcellular location">
    <subcellularLocation>
        <location evidence="1">Cell inner membrane</location>
        <topology evidence="1">Peripheral membrane protein</topology>
        <orientation evidence="1">Cytoplasmic side</orientation>
    </subcellularLocation>
</comment>
<comment type="similarity">
    <text evidence="1">Belongs to the TRAFAC class translation factor GTPase superfamily. Classic translation factor GTPase family. LepA subfamily.</text>
</comment>
<name>LEPA_RHIJ3</name>
<protein>
    <recommendedName>
        <fullName evidence="1">Elongation factor 4</fullName>
        <shortName evidence="1">EF-4</shortName>
        <ecNumber evidence="1">3.6.5.n1</ecNumber>
    </recommendedName>
    <alternativeName>
        <fullName evidence="1">Ribosomal back-translocase LepA</fullName>
    </alternativeName>
</protein>
<keyword id="KW-0997">Cell inner membrane</keyword>
<keyword id="KW-1003">Cell membrane</keyword>
<keyword id="KW-0342">GTP-binding</keyword>
<keyword id="KW-0378">Hydrolase</keyword>
<keyword id="KW-0472">Membrane</keyword>
<keyword id="KW-0547">Nucleotide-binding</keyword>
<keyword id="KW-0648">Protein biosynthesis</keyword>
<evidence type="ECO:0000255" key="1">
    <source>
        <dbReference type="HAMAP-Rule" id="MF_00071"/>
    </source>
</evidence>
<reference key="1">
    <citation type="journal article" date="2006" name="Genome Biol.">
        <title>The genome of Rhizobium leguminosarum has recognizable core and accessory components.</title>
        <authorList>
            <person name="Young J.P.W."/>
            <person name="Crossman L.C."/>
            <person name="Johnston A.W.B."/>
            <person name="Thomson N.R."/>
            <person name="Ghazoui Z.F."/>
            <person name="Hull K.H."/>
            <person name="Wexler M."/>
            <person name="Curson A.R.J."/>
            <person name="Todd J.D."/>
            <person name="Poole P.S."/>
            <person name="Mauchline T.H."/>
            <person name="East A.K."/>
            <person name="Quail M.A."/>
            <person name="Churcher C."/>
            <person name="Arrowsmith C."/>
            <person name="Cherevach I."/>
            <person name="Chillingworth T."/>
            <person name="Clarke K."/>
            <person name="Cronin A."/>
            <person name="Davis P."/>
            <person name="Fraser A."/>
            <person name="Hance Z."/>
            <person name="Hauser H."/>
            <person name="Jagels K."/>
            <person name="Moule S."/>
            <person name="Mungall K."/>
            <person name="Norbertczak H."/>
            <person name="Rabbinowitsch E."/>
            <person name="Sanders M."/>
            <person name="Simmonds M."/>
            <person name="Whitehead S."/>
            <person name="Parkhill J."/>
        </authorList>
    </citation>
    <scope>NUCLEOTIDE SEQUENCE [LARGE SCALE GENOMIC DNA]</scope>
    <source>
        <strain>DSM 114642 / LMG 32736 / 3841</strain>
    </source>
</reference>
<gene>
    <name evidence="1" type="primary">lepA</name>
    <name type="ordered locus">RL0254</name>
</gene>